<dbReference type="EMBL" id="CP000159">
    <property type="protein sequence ID" value="ABC45218.1"/>
    <property type="molecule type" value="Genomic_DNA"/>
</dbReference>
<dbReference type="RefSeq" id="YP_445777.1">
    <property type="nucleotide sequence ID" value="NC_007677.1"/>
</dbReference>
<dbReference type="SMR" id="Q2S204"/>
<dbReference type="STRING" id="309807.SRU_1658"/>
<dbReference type="EnsemblBacteria" id="ABC45218">
    <property type="protein sequence ID" value="ABC45218"/>
    <property type="gene ID" value="SRU_1658"/>
</dbReference>
<dbReference type="KEGG" id="sru:SRU_1658"/>
<dbReference type="PATRIC" id="fig|309807.25.peg.1719"/>
<dbReference type="eggNOG" id="COG4108">
    <property type="taxonomic scope" value="Bacteria"/>
</dbReference>
<dbReference type="HOGENOM" id="CLU_002794_2_1_10"/>
<dbReference type="OrthoDB" id="9801591at2"/>
<dbReference type="Proteomes" id="UP000008674">
    <property type="component" value="Chromosome"/>
</dbReference>
<dbReference type="GO" id="GO:0005829">
    <property type="term" value="C:cytosol"/>
    <property type="evidence" value="ECO:0007669"/>
    <property type="project" value="TreeGrafter"/>
</dbReference>
<dbReference type="GO" id="GO:0005525">
    <property type="term" value="F:GTP binding"/>
    <property type="evidence" value="ECO:0007669"/>
    <property type="project" value="UniProtKB-UniRule"/>
</dbReference>
<dbReference type="GO" id="GO:0003924">
    <property type="term" value="F:GTPase activity"/>
    <property type="evidence" value="ECO:0007669"/>
    <property type="project" value="InterPro"/>
</dbReference>
<dbReference type="GO" id="GO:0016150">
    <property type="term" value="F:translation release factor activity, codon nonspecific"/>
    <property type="evidence" value="ECO:0007669"/>
    <property type="project" value="TreeGrafter"/>
</dbReference>
<dbReference type="GO" id="GO:0016149">
    <property type="term" value="F:translation release factor activity, codon specific"/>
    <property type="evidence" value="ECO:0007669"/>
    <property type="project" value="UniProtKB-UniRule"/>
</dbReference>
<dbReference type="GO" id="GO:0006449">
    <property type="term" value="P:regulation of translational termination"/>
    <property type="evidence" value="ECO:0007669"/>
    <property type="project" value="UniProtKB-UniRule"/>
</dbReference>
<dbReference type="CDD" id="cd04169">
    <property type="entry name" value="RF3"/>
    <property type="match status" value="1"/>
</dbReference>
<dbReference type="CDD" id="cd03689">
    <property type="entry name" value="RF3_II"/>
    <property type="match status" value="1"/>
</dbReference>
<dbReference type="CDD" id="cd16259">
    <property type="entry name" value="RF3_III"/>
    <property type="match status" value="1"/>
</dbReference>
<dbReference type="FunFam" id="3.30.70.3280:FF:000001">
    <property type="entry name" value="Peptide chain release factor 3"/>
    <property type="match status" value="1"/>
</dbReference>
<dbReference type="FunFam" id="3.40.50.300:FF:000542">
    <property type="entry name" value="Peptide chain release factor 3"/>
    <property type="match status" value="1"/>
</dbReference>
<dbReference type="Gene3D" id="3.40.50.300">
    <property type="entry name" value="P-loop containing nucleotide triphosphate hydrolases"/>
    <property type="match status" value="2"/>
</dbReference>
<dbReference type="Gene3D" id="3.30.70.3280">
    <property type="entry name" value="Peptide chain release factor 3, domain III"/>
    <property type="match status" value="1"/>
</dbReference>
<dbReference type="HAMAP" id="MF_00072">
    <property type="entry name" value="Rel_fac_3"/>
    <property type="match status" value="1"/>
</dbReference>
<dbReference type="InterPro" id="IPR053905">
    <property type="entry name" value="EF-G-like_DII"/>
</dbReference>
<dbReference type="InterPro" id="IPR035647">
    <property type="entry name" value="EFG_III/V"/>
</dbReference>
<dbReference type="InterPro" id="IPR031157">
    <property type="entry name" value="G_TR_CS"/>
</dbReference>
<dbReference type="InterPro" id="IPR027417">
    <property type="entry name" value="P-loop_NTPase"/>
</dbReference>
<dbReference type="InterPro" id="IPR004548">
    <property type="entry name" value="PrfC"/>
</dbReference>
<dbReference type="InterPro" id="IPR032090">
    <property type="entry name" value="RF3_C"/>
</dbReference>
<dbReference type="InterPro" id="IPR038467">
    <property type="entry name" value="RF3_dom_3_sf"/>
</dbReference>
<dbReference type="InterPro" id="IPR041732">
    <property type="entry name" value="RF3_GTP-bd"/>
</dbReference>
<dbReference type="InterPro" id="IPR005225">
    <property type="entry name" value="Small_GTP-bd"/>
</dbReference>
<dbReference type="InterPro" id="IPR000795">
    <property type="entry name" value="T_Tr_GTP-bd_dom"/>
</dbReference>
<dbReference type="InterPro" id="IPR009000">
    <property type="entry name" value="Transl_B-barrel_sf"/>
</dbReference>
<dbReference type="NCBIfam" id="TIGR00503">
    <property type="entry name" value="prfC"/>
    <property type="match status" value="1"/>
</dbReference>
<dbReference type="NCBIfam" id="NF001964">
    <property type="entry name" value="PRK00741.1"/>
    <property type="match status" value="1"/>
</dbReference>
<dbReference type="NCBIfam" id="TIGR00231">
    <property type="entry name" value="small_GTP"/>
    <property type="match status" value="1"/>
</dbReference>
<dbReference type="PANTHER" id="PTHR43556">
    <property type="entry name" value="PEPTIDE CHAIN RELEASE FACTOR RF3"/>
    <property type="match status" value="1"/>
</dbReference>
<dbReference type="PANTHER" id="PTHR43556:SF2">
    <property type="entry name" value="PEPTIDE CHAIN RELEASE FACTOR RF3"/>
    <property type="match status" value="1"/>
</dbReference>
<dbReference type="Pfam" id="PF22042">
    <property type="entry name" value="EF-G_D2"/>
    <property type="match status" value="1"/>
</dbReference>
<dbReference type="Pfam" id="PF00009">
    <property type="entry name" value="GTP_EFTU"/>
    <property type="match status" value="1"/>
</dbReference>
<dbReference type="Pfam" id="PF16658">
    <property type="entry name" value="RF3_C"/>
    <property type="match status" value="1"/>
</dbReference>
<dbReference type="PRINTS" id="PR00315">
    <property type="entry name" value="ELONGATNFCT"/>
</dbReference>
<dbReference type="SUPFAM" id="SSF54980">
    <property type="entry name" value="EF-G C-terminal domain-like"/>
    <property type="match status" value="1"/>
</dbReference>
<dbReference type="SUPFAM" id="SSF52540">
    <property type="entry name" value="P-loop containing nucleoside triphosphate hydrolases"/>
    <property type="match status" value="1"/>
</dbReference>
<dbReference type="SUPFAM" id="SSF50447">
    <property type="entry name" value="Translation proteins"/>
    <property type="match status" value="1"/>
</dbReference>
<dbReference type="PROSITE" id="PS00301">
    <property type="entry name" value="G_TR_1"/>
    <property type="match status" value="1"/>
</dbReference>
<dbReference type="PROSITE" id="PS51722">
    <property type="entry name" value="G_TR_2"/>
    <property type="match status" value="1"/>
</dbReference>
<organism>
    <name type="scientific">Salinibacter ruber (strain DSM 13855 / M31)</name>
    <dbReference type="NCBI Taxonomy" id="309807"/>
    <lineage>
        <taxon>Bacteria</taxon>
        <taxon>Pseudomonadati</taxon>
        <taxon>Rhodothermota</taxon>
        <taxon>Rhodothermia</taxon>
        <taxon>Rhodothermales</taxon>
        <taxon>Salinibacteraceae</taxon>
        <taxon>Salinibacter</taxon>
    </lineage>
</organism>
<reference key="1">
    <citation type="journal article" date="2005" name="Proc. Natl. Acad. Sci. U.S.A.">
        <title>The genome of Salinibacter ruber: convergence and gene exchange among hyperhalophilic bacteria and archaea.</title>
        <authorList>
            <person name="Mongodin E.F."/>
            <person name="Nelson K.E."/>
            <person name="Daugherty S."/>
            <person name="DeBoy R.T."/>
            <person name="Wister J."/>
            <person name="Khouri H."/>
            <person name="Weidman J."/>
            <person name="Walsh D.A."/>
            <person name="Papke R.T."/>
            <person name="Sanchez Perez G."/>
            <person name="Sharma A.K."/>
            <person name="Nesbo C.L."/>
            <person name="MacLeod D."/>
            <person name="Bapteste E."/>
            <person name="Doolittle W.F."/>
            <person name="Charlebois R.L."/>
            <person name="Legault B."/>
            <person name="Rodriguez-Valera F."/>
        </authorList>
    </citation>
    <scope>NUCLEOTIDE SEQUENCE [LARGE SCALE GENOMIC DNA]</scope>
    <source>
        <strain>DSM 13855 / CECT 5946 / M31</strain>
    </source>
</reference>
<accession>Q2S204</accession>
<feature type="chain" id="PRO_0000242204" description="Peptide chain release factor 3">
    <location>
        <begin position="1"/>
        <end position="533"/>
    </location>
</feature>
<feature type="domain" description="tr-type G">
    <location>
        <begin position="10"/>
        <end position="278"/>
    </location>
</feature>
<feature type="binding site" evidence="1">
    <location>
        <begin position="19"/>
        <end position="26"/>
    </location>
    <ligand>
        <name>GTP</name>
        <dbReference type="ChEBI" id="CHEBI:37565"/>
    </ligand>
</feature>
<feature type="binding site" evidence="1">
    <location>
        <begin position="87"/>
        <end position="91"/>
    </location>
    <ligand>
        <name>GTP</name>
        <dbReference type="ChEBI" id="CHEBI:37565"/>
    </ligand>
</feature>
<feature type="binding site" evidence="1">
    <location>
        <begin position="141"/>
        <end position="144"/>
    </location>
    <ligand>
        <name>GTP</name>
        <dbReference type="ChEBI" id="CHEBI:37565"/>
    </ligand>
</feature>
<protein>
    <recommendedName>
        <fullName evidence="1">Peptide chain release factor 3</fullName>
        <shortName evidence="1">RF-3</shortName>
    </recommendedName>
</protein>
<keyword id="KW-0963">Cytoplasm</keyword>
<keyword id="KW-0342">GTP-binding</keyword>
<keyword id="KW-0547">Nucleotide-binding</keyword>
<keyword id="KW-0648">Protein biosynthesis</keyword>
<keyword id="KW-1185">Reference proteome</keyword>
<comment type="function">
    <text evidence="1">Increases the formation of ribosomal termination complexes and stimulates activities of RF-1 and RF-2. It binds guanine nucleotides and has strong preference for UGA stop codons. It may interact directly with the ribosome. The stimulation of RF-1 and RF-2 is significantly reduced by GTP and GDP, but not by GMP.</text>
</comment>
<comment type="subcellular location">
    <subcellularLocation>
        <location evidence="1">Cytoplasm</location>
    </subcellularLocation>
</comment>
<comment type="similarity">
    <text evidence="1">Belongs to the TRAFAC class translation factor GTPase superfamily. Classic translation factor GTPase family. PrfC subfamily.</text>
</comment>
<proteinExistence type="inferred from homology"/>
<sequence length="533" mass="60329">MDPVLKDEIEKRRTFAIISHPDAGKTTLTEKLLLKGGAIHEAGEIKARKADRFAMSDWMTMEKERGISVTSSVMKFPYRGYELNLLDTPGHRDFSEDTYRVLTAADSVIMVLDNASGVEQQTEKLMEVCRMQDTPIITFVNKMDRHGLPPLDILEDIEDTLDLDTVPLSWPIGMGNRFRGTYNLYRDELHLFSHADMDGEHERLPIDDLDDPQLDEVLGDQADDLRFDVELVREAGDELDLQAYLGGKQTPVFFGSALSNFGVGDMFDTFVEIAPPPQPRPTVTRDVSPYEDDFTGVAFKIQANMDPKHHDRMAFVRVCSGKFEKGMEVIHHRTGQTMRLNNATTFMAQDREGVDTAYPGDIIGIMSHGRVKIGDSFSTAEPLHFTGVPSFAPEHFRKVRLDDPFRSKHLSKGLQQLSEEGTIQAFRPLRGNDYILGAVGELQFDVTLDRLEDEYNVDAHLTGVRYACCRWIDGPAEDLEDFEAENMDSLFRDAGGDLAYLALSDFRLERTMENWPRISFNSTKQHTAEEERS</sequence>
<evidence type="ECO:0000255" key="1">
    <source>
        <dbReference type="HAMAP-Rule" id="MF_00072"/>
    </source>
</evidence>
<gene>
    <name evidence="1" type="primary">prfC</name>
    <name type="ordered locus">SRU_1658</name>
</gene>
<name>RF3_SALRD</name>